<accession>Q3J4N3</accession>
<dbReference type="EC" id="2.1.1.199" evidence="1"/>
<dbReference type="EMBL" id="CP000143">
    <property type="protein sequence ID" value="ABA78251.1"/>
    <property type="molecule type" value="Genomic_DNA"/>
</dbReference>
<dbReference type="RefSeq" id="WP_011337235.1">
    <property type="nucleotide sequence ID" value="NC_007493.2"/>
</dbReference>
<dbReference type="RefSeq" id="YP_352152.1">
    <property type="nucleotide sequence ID" value="NC_007493.2"/>
</dbReference>
<dbReference type="SMR" id="Q3J4N3"/>
<dbReference type="STRING" id="272943.RSP_6038"/>
<dbReference type="EnsemblBacteria" id="ABA78251">
    <property type="protein sequence ID" value="ABA78251"/>
    <property type="gene ID" value="RSP_6038"/>
</dbReference>
<dbReference type="GeneID" id="3719530"/>
<dbReference type="KEGG" id="rsp:RSP_6038"/>
<dbReference type="PATRIC" id="fig|272943.9.peg.989"/>
<dbReference type="eggNOG" id="COG0275">
    <property type="taxonomic scope" value="Bacteria"/>
</dbReference>
<dbReference type="OrthoDB" id="9806637at2"/>
<dbReference type="PhylomeDB" id="Q3J4N3"/>
<dbReference type="Proteomes" id="UP000002703">
    <property type="component" value="Chromosome 1"/>
</dbReference>
<dbReference type="GO" id="GO:0005737">
    <property type="term" value="C:cytoplasm"/>
    <property type="evidence" value="ECO:0007669"/>
    <property type="project" value="UniProtKB-SubCell"/>
</dbReference>
<dbReference type="GO" id="GO:0071424">
    <property type="term" value="F:rRNA (cytosine-N4-)-methyltransferase activity"/>
    <property type="evidence" value="ECO:0007669"/>
    <property type="project" value="UniProtKB-UniRule"/>
</dbReference>
<dbReference type="GO" id="GO:0070475">
    <property type="term" value="P:rRNA base methylation"/>
    <property type="evidence" value="ECO:0007669"/>
    <property type="project" value="UniProtKB-UniRule"/>
</dbReference>
<dbReference type="CDD" id="cd02440">
    <property type="entry name" value="AdoMet_MTases"/>
    <property type="match status" value="1"/>
</dbReference>
<dbReference type="FunFam" id="1.10.150.170:FF:000003">
    <property type="entry name" value="Ribosomal RNA small subunit methyltransferase H"/>
    <property type="match status" value="1"/>
</dbReference>
<dbReference type="Gene3D" id="1.10.150.170">
    <property type="entry name" value="Putative methyltransferase TM0872, insert domain"/>
    <property type="match status" value="1"/>
</dbReference>
<dbReference type="Gene3D" id="3.40.50.150">
    <property type="entry name" value="Vaccinia Virus protein VP39"/>
    <property type="match status" value="1"/>
</dbReference>
<dbReference type="HAMAP" id="MF_01007">
    <property type="entry name" value="16SrRNA_methyltr_H"/>
    <property type="match status" value="1"/>
</dbReference>
<dbReference type="InterPro" id="IPR002903">
    <property type="entry name" value="RsmH"/>
</dbReference>
<dbReference type="InterPro" id="IPR023397">
    <property type="entry name" value="SAM-dep_MeTrfase_MraW_recog"/>
</dbReference>
<dbReference type="InterPro" id="IPR029063">
    <property type="entry name" value="SAM-dependent_MTases_sf"/>
</dbReference>
<dbReference type="NCBIfam" id="TIGR00006">
    <property type="entry name" value="16S rRNA (cytosine(1402)-N(4))-methyltransferase RsmH"/>
    <property type="match status" value="1"/>
</dbReference>
<dbReference type="PANTHER" id="PTHR11265:SF0">
    <property type="entry name" value="12S RRNA N4-METHYLCYTIDINE METHYLTRANSFERASE"/>
    <property type="match status" value="1"/>
</dbReference>
<dbReference type="PANTHER" id="PTHR11265">
    <property type="entry name" value="S-ADENOSYL-METHYLTRANSFERASE MRAW"/>
    <property type="match status" value="1"/>
</dbReference>
<dbReference type="Pfam" id="PF01795">
    <property type="entry name" value="Methyltransf_5"/>
    <property type="match status" value="1"/>
</dbReference>
<dbReference type="PIRSF" id="PIRSF004486">
    <property type="entry name" value="MraW"/>
    <property type="match status" value="1"/>
</dbReference>
<dbReference type="SUPFAM" id="SSF81799">
    <property type="entry name" value="Putative methyltransferase TM0872, insert domain"/>
    <property type="match status" value="1"/>
</dbReference>
<dbReference type="SUPFAM" id="SSF53335">
    <property type="entry name" value="S-adenosyl-L-methionine-dependent methyltransferases"/>
    <property type="match status" value="1"/>
</dbReference>
<comment type="function">
    <text evidence="1">Specifically methylates the N4 position of cytidine in position 1402 (C1402) of 16S rRNA.</text>
</comment>
<comment type="catalytic activity">
    <reaction evidence="1">
        <text>cytidine(1402) in 16S rRNA + S-adenosyl-L-methionine = N(4)-methylcytidine(1402) in 16S rRNA + S-adenosyl-L-homocysteine + H(+)</text>
        <dbReference type="Rhea" id="RHEA:42928"/>
        <dbReference type="Rhea" id="RHEA-COMP:10286"/>
        <dbReference type="Rhea" id="RHEA-COMP:10287"/>
        <dbReference type="ChEBI" id="CHEBI:15378"/>
        <dbReference type="ChEBI" id="CHEBI:57856"/>
        <dbReference type="ChEBI" id="CHEBI:59789"/>
        <dbReference type="ChEBI" id="CHEBI:74506"/>
        <dbReference type="ChEBI" id="CHEBI:82748"/>
        <dbReference type="EC" id="2.1.1.199"/>
    </reaction>
</comment>
<comment type="subcellular location">
    <subcellularLocation>
        <location evidence="1">Cytoplasm</location>
    </subcellularLocation>
</comment>
<comment type="similarity">
    <text evidence="1">Belongs to the methyltransferase superfamily. RsmH family.</text>
</comment>
<protein>
    <recommendedName>
        <fullName evidence="1">Ribosomal RNA small subunit methyltransferase H</fullName>
        <ecNumber evidence="1">2.1.1.199</ecNumber>
    </recommendedName>
    <alternativeName>
        <fullName evidence="1">16S rRNA m(4)C1402 methyltransferase</fullName>
    </alternativeName>
    <alternativeName>
        <fullName evidence="1">rRNA (cytosine-N(4)-)-methyltransferase RsmH</fullName>
    </alternativeName>
</protein>
<organism>
    <name type="scientific">Cereibacter sphaeroides (strain ATCC 17023 / DSM 158 / JCM 6121 / CCUG 31486 / LMG 2827 / NBRC 12203 / NCIMB 8253 / ATH 2.4.1.)</name>
    <name type="common">Rhodobacter sphaeroides</name>
    <dbReference type="NCBI Taxonomy" id="272943"/>
    <lineage>
        <taxon>Bacteria</taxon>
        <taxon>Pseudomonadati</taxon>
        <taxon>Pseudomonadota</taxon>
        <taxon>Alphaproteobacteria</taxon>
        <taxon>Rhodobacterales</taxon>
        <taxon>Paracoccaceae</taxon>
        <taxon>Cereibacter</taxon>
    </lineage>
</organism>
<gene>
    <name evidence="1" type="primary">rsmH</name>
    <name type="synonym">mraW</name>
    <name type="ordered locus">RHOS4_06830</name>
    <name type="ORF">RSP_6038</name>
</gene>
<feature type="chain" id="PRO_0000223561" description="Ribosomal RNA small subunit methyltransferase H">
    <location>
        <begin position="1"/>
        <end position="331"/>
    </location>
</feature>
<feature type="region of interest" description="Disordered" evidence="2">
    <location>
        <begin position="287"/>
        <end position="331"/>
    </location>
</feature>
<feature type="binding site" evidence="1">
    <location>
        <begin position="38"/>
        <end position="40"/>
    </location>
    <ligand>
        <name>S-adenosyl-L-methionine</name>
        <dbReference type="ChEBI" id="CHEBI:59789"/>
    </ligand>
</feature>
<feature type="binding site" evidence="1">
    <location>
        <position position="56"/>
    </location>
    <ligand>
        <name>S-adenosyl-L-methionine</name>
        <dbReference type="ChEBI" id="CHEBI:59789"/>
    </ligand>
</feature>
<feature type="binding site" evidence="1">
    <location>
        <position position="83"/>
    </location>
    <ligand>
        <name>S-adenosyl-L-methionine</name>
        <dbReference type="ChEBI" id="CHEBI:59789"/>
    </ligand>
</feature>
<feature type="binding site" evidence="1">
    <location>
        <position position="100"/>
    </location>
    <ligand>
        <name>S-adenosyl-L-methionine</name>
        <dbReference type="ChEBI" id="CHEBI:59789"/>
    </ligand>
</feature>
<feature type="binding site" evidence="1">
    <location>
        <position position="107"/>
    </location>
    <ligand>
        <name>S-adenosyl-L-methionine</name>
        <dbReference type="ChEBI" id="CHEBI:59789"/>
    </ligand>
</feature>
<evidence type="ECO:0000255" key="1">
    <source>
        <dbReference type="HAMAP-Rule" id="MF_01007"/>
    </source>
</evidence>
<evidence type="ECO:0000256" key="2">
    <source>
        <dbReference type="SAM" id="MobiDB-lite"/>
    </source>
</evidence>
<keyword id="KW-0963">Cytoplasm</keyword>
<keyword id="KW-0489">Methyltransferase</keyword>
<keyword id="KW-1185">Reference proteome</keyword>
<keyword id="KW-0698">rRNA processing</keyword>
<keyword id="KW-0949">S-adenosyl-L-methionine</keyword>
<keyword id="KW-0808">Transferase</keyword>
<name>RSMH_CERS4</name>
<reference key="1">
    <citation type="submission" date="2005-09" db="EMBL/GenBank/DDBJ databases">
        <title>Complete sequence of chromosome 1 of Rhodobacter sphaeroides 2.4.1.</title>
        <authorList>
            <person name="Copeland A."/>
            <person name="Lucas S."/>
            <person name="Lapidus A."/>
            <person name="Barry K."/>
            <person name="Detter J.C."/>
            <person name="Glavina T."/>
            <person name="Hammon N."/>
            <person name="Israni S."/>
            <person name="Pitluck S."/>
            <person name="Richardson P."/>
            <person name="Mackenzie C."/>
            <person name="Choudhary M."/>
            <person name="Larimer F."/>
            <person name="Hauser L.J."/>
            <person name="Land M."/>
            <person name="Donohue T.J."/>
            <person name="Kaplan S."/>
        </authorList>
    </citation>
    <scope>NUCLEOTIDE SEQUENCE [LARGE SCALE GENOMIC DNA]</scope>
    <source>
        <strain>ATCC 17023 / DSM 158 / JCM 6121 / CCUG 31486 / LMG 2827 / NBRC 12203 / NCIMB 8253 / ATH 2.4.1.</strain>
    </source>
</reference>
<sequence>MAEADTERRPHIPVLLRPLLAAVAPVEGTWLDGTFGAGGYARGLLEAGADRVIGVDRDPLALKMASGWAGDYGDRLRLVAGTFSQLDSHAGAPLDGVVLDLGVSSMQLDLAERGFSFQKDGPLDMRMSQEGESAADLVNTASEETLADILYHYGEERASRRIARAIVEARAAAPITRTLALAEIVARCLPRPKPGQMHPATRSFQAIRIAVNAEFSELVEGLEAAERALRPGGRLAVVTFHSLEDRIVKRFLQLRSGGEGQGNRYAPETRADAPRFTLPLRRAISPDEAELAENPRARSARLRVGVRTDAPAGKVDPQALGTPLIPKKGRR</sequence>
<proteinExistence type="inferred from homology"/>